<reference key="1">
    <citation type="journal article" date="2006" name="Nat. Biotechnol.">
        <title>Genome sequence of the ubiquitous hydrocarbon-degrading marine bacterium Alcanivorax borkumensis.</title>
        <authorList>
            <person name="Schneiker S."/>
            <person name="Martins dos Santos V.A.P."/>
            <person name="Bartels D."/>
            <person name="Bekel T."/>
            <person name="Brecht M."/>
            <person name="Buhrmester J."/>
            <person name="Chernikova T.N."/>
            <person name="Denaro R."/>
            <person name="Ferrer M."/>
            <person name="Gertler C."/>
            <person name="Goesmann A."/>
            <person name="Golyshina O.V."/>
            <person name="Kaminski F."/>
            <person name="Khachane A.N."/>
            <person name="Lang S."/>
            <person name="Linke B."/>
            <person name="McHardy A.C."/>
            <person name="Meyer F."/>
            <person name="Nechitaylo T."/>
            <person name="Puehler A."/>
            <person name="Regenhardt D."/>
            <person name="Rupp O."/>
            <person name="Sabirova J.S."/>
            <person name="Selbitschka W."/>
            <person name="Yakimov M.M."/>
            <person name="Timmis K.N."/>
            <person name="Vorhoelter F.-J."/>
            <person name="Weidner S."/>
            <person name="Kaiser O."/>
            <person name="Golyshin P.N."/>
        </authorList>
    </citation>
    <scope>NUCLEOTIDE SEQUENCE [LARGE SCALE GENOMIC DNA]</scope>
    <source>
        <strain>ATCC 700651 / DSM 11573 / NCIMB 13689 / SK2</strain>
    </source>
</reference>
<comment type="catalytic activity">
    <reaction evidence="1">
        <text>tRNA(Leu) + L-leucine + ATP = L-leucyl-tRNA(Leu) + AMP + diphosphate</text>
        <dbReference type="Rhea" id="RHEA:11688"/>
        <dbReference type="Rhea" id="RHEA-COMP:9613"/>
        <dbReference type="Rhea" id="RHEA-COMP:9622"/>
        <dbReference type="ChEBI" id="CHEBI:30616"/>
        <dbReference type="ChEBI" id="CHEBI:33019"/>
        <dbReference type="ChEBI" id="CHEBI:57427"/>
        <dbReference type="ChEBI" id="CHEBI:78442"/>
        <dbReference type="ChEBI" id="CHEBI:78494"/>
        <dbReference type="ChEBI" id="CHEBI:456215"/>
        <dbReference type="EC" id="6.1.1.4"/>
    </reaction>
</comment>
<comment type="subcellular location">
    <subcellularLocation>
        <location evidence="1">Cytoplasm</location>
    </subcellularLocation>
</comment>
<comment type="similarity">
    <text evidence="1">Belongs to the class-I aminoacyl-tRNA synthetase family.</text>
</comment>
<comment type="sequence caution" evidence="2">
    <conflict type="erroneous initiation">
        <sequence resource="EMBL-CDS" id="CAL17395"/>
    </conflict>
</comment>
<accession>Q0VN53</accession>
<name>SYL_ALCBS</name>
<keyword id="KW-0030">Aminoacyl-tRNA synthetase</keyword>
<keyword id="KW-0067">ATP-binding</keyword>
<keyword id="KW-0963">Cytoplasm</keyword>
<keyword id="KW-0436">Ligase</keyword>
<keyword id="KW-0547">Nucleotide-binding</keyword>
<keyword id="KW-0648">Protein biosynthesis</keyword>
<keyword id="KW-1185">Reference proteome</keyword>
<organism>
    <name type="scientific">Alcanivorax borkumensis (strain ATCC 700651 / DSM 11573 / NCIMB 13689 / SK2)</name>
    <dbReference type="NCBI Taxonomy" id="393595"/>
    <lineage>
        <taxon>Bacteria</taxon>
        <taxon>Pseudomonadati</taxon>
        <taxon>Pseudomonadota</taxon>
        <taxon>Gammaproteobacteria</taxon>
        <taxon>Oceanospirillales</taxon>
        <taxon>Alcanivoracaceae</taxon>
        <taxon>Alcanivorax</taxon>
    </lineage>
</organism>
<protein>
    <recommendedName>
        <fullName evidence="1">Leucine--tRNA ligase</fullName>
        <ecNumber evidence="1">6.1.1.4</ecNumber>
    </recommendedName>
    <alternativeName>
        <fullName evidence="1">Leucyl-tRNA synthetase</fullName>
        <shortName evidence="1">LeuRS</shortName>
    </alternativeName>
</protein>
<dbReference type="EC" id="6.1.1.4" evidence="1"/>
<dbReference type="EMBL" id="AM286690">
    <property type="protein sequence ID" value="CAL17395.1"/>
    <property type="status" value="ALT_INIT"/>
    <property type="molecule type" value="Genomic_DNA"/>
</dbReference>
<dbReference type="RefSeq" id="WP_041705012.1">
    <property type="nucleotide sequence ID" value="NC_008260.1"/>
</dbReference>
<dbReference type="SMR" id="Q0VN53"/>
<dbReference type="STRING" id="393595.ABO_1947"/>
<dbReference type="KEGG" id="abo:ABO_1947"/>
<dbReference type="eggNOG" id="COG0495">
    <property type="taxonomic scope" value="Bacteria"/>
</dbReference>
<dbReference type="HOGENOM" id="CLU_004427_0_0_6"/>
<dbReference type="OrthoDB" id="9810365at2"/>
<dbReference type="Proteomes" id="UP000008871">
    <property type="component" value="Chromosome"/>
</dbReference>
<dbReference type="GO" id="GO:0005829">
    <property type="term" value="C:cytosol"/>
    <property type="evidence" value="ECO:0007669"/>
    <property type="project" value="TreeGrafter"/>
</dbReference>
<dbReference type="GO" id="GO:0002161">
    <property type="term" value="F:aminoacyl-tRNA deacylase activity"/>
    <property type="evidence" value="ECO:0007669"/>
    <property type="project" value="InterPro"/>
</dbReference>
<dbReference type="GO" id="GO:0005524">
    <property type="term" value="F:ATP binding"/>
    <property type="evidence" value="ECO:0007669"/>
    <property type="project" value="UniProtKB-UniRule"/>
</dbReference>
<dbReference type="GO" id="GO:0004823">
    <property type="term" value="F:leucine-tRNA ligase activity"/>
    <property type="evidence" value="ECO:0007669"/>
    <property type="project" value="UniProtKB-UniRule"/>
</dbReference>
<dbReference type="GO" id="GO:0006429">
    <property type="term" value="P:leucyl-tRNA aminoacylation"/>
    <property type="evidence" value="ECO:0007669"/>
    <property type="project" value="UniProtKB-UniRule"/>
</dbReference>
<dbReference type="CDD" id="cd07958">
    <property type="entry name" value="Anticodon_Ia_Leu_BEm"/>
    <property type="match status" value="1"/>
</dbReference>
<dbReference type="CDD" id="cd00812">
    <property type="entry name" value="LeuRS_core"/>
    <property type="match status" value="1"/>
</dbReference>
<dbReference type="FunFam" id="3.10.20.590:FF:000001">
    <property type="entry name" value="Leucine--tRNA ligase"/>
    <property type="match status" value="1"/>
</dbReference>
<dbReference type="FunFam" id="3.40.50.620:FF:000003">
    <property type="entry name" value="Leucine--tRNA ligase"/>
    <property type="match status" value="1"/>
</dbReference>
<dbReference type="FunFam" id="3.40.50.620:FF:000124">
    <property type="entry name" value="Leucine--tRNA ligase"/>
    <property type="match status" value="1"/>
</dbReference>
<dbReference type="FunFam" id="3.90.740.10:FF:000012">
    <property type="entry name" value="Leucine--tRNA ligase"/>
    <property type="match status" value="1"/>
</dbReference>
<dbReference type="FunFam" id="1.10.730.10:FF:000011">
    <property type="entry name" value="Leucine--tRNA ligase chloroplastic/mitochondrial"/>
    <property type="match status" value="1"/>
</dbReference>
<dbReference type="Gene3D" id="3.10.20.590">
    <property type="match status" value="1"/>
</dbReference>
<dbReference type="Gene3D" id="3.40.50.620">
    <property type="entry name" value="HUPs"/>
    <property type="match status" value="2"/>
</dbReference>
<dbReference type="Gene3D" id="1.10.730.10">
    <property type="entry name" value="Isoleucyl-tRNA Synthetase, Domain 1"/>
    <property type="match status" value="2"/>
</dbReference>
<dbReference type="HAMAP" id="MF_00049_B">
    <property type="entry name" value="Leu_tRNA_synth_B"/>
    <property type="match status" value="1"/>
</dbReference>
<dbReference type="InterPro" id="IPR001412">
    <property type="entry name" value="aa-tRNA-synth_I_CS"/>
</dbReference>
<dbReference type="InterPro" id="IPR002300">
    <property type="entry name" value="aa-tRNA-synth_Ia"/>
</dbReference>
<dbReference type="InterPro" id="IPR002302">
    <property type="entry name" value="Leu-tRNA-ligase"/>
</dbReference>
<dbReference type="InterPro" id="IPR025709">
    <property type="entry name" value="Leu_tRNA-synth_edit"/>
</dbReference>
<dbReference type="InterPro" id="IPR013155">
    <property type="entry name" value="M/V/L/I-tRNA-synth_anticd-bd"/>
</dbReference>
<dbReference type="InterPro" id="IPR015413">
    <property type="entry name" value="Methionyl/Leucyl_tRNA_Synth"/>
</dbReference>
<dbReference type="InterPro" id="IPR014729">
    <property type="entry name" value="Rossmann-like_a/b/a_fold"/>
</dbReference>
<dbReference type="InterPro" id="IPR009080">
    <property type="entry name" value="tRNAsynth_Ia_anticodon-bd"/>
</dbReference>
<dbReference type="InterPro" id="IPR009008">
    <property type="entry name" value="Val/Leu/Ile-tRNA-synth_edit"/>
</dbReference>
<dbReference type="NCBIfam" id="TIGR00396">
    <property type="entry name" value="leuS_bact"/>
    <property type="match status" value="1"/>
</dbReference>
<dbReference type="PANTHER" id="PTHR43740:SF2">
    <property type="entry name" value="LEUCINE--TRNA LIGASE, MITOCHONDRIAL"/>
    <property type="match status" value="1"/>
</dbReference>
<dbReference type="PANTHER" id="PTHR43740">
    <property type="entry name" value="LEUCYL-TRNA SYNTHETASE"/>
    <property type="match status" value="1"/>
</dbReference>
<dbReference type="Pfam" id="PF08264">
    <property type="entry name" value="Anticodon_1"/>
    <property type="match status" value="1"/>
</dbReference>
<dbReference type="Pfam" id="PF00133">
    <property type="entry name" value="tRNA-synt_1"/>
    <property type="match status" value="1"/>
</dbReference>
<dbReference type="Pfam" id="PF13603">
    <property type="entry name" value="tRNA-synt_1_2"/>
    <property type="match status" value="1"/>
</dbReference>
<dbReference type="Pfam" id="PF09334">
    <property type="entry name" value="tRNA-synt_1g"/>
    <property type="match status" value="1"/>
</dbReference>
<dbReference type="PRINTS" id="PR00985">
    <property type="entry name" value="TRNASYNTHLEU"/>
</dbReference>
<dbReference type="SUPFAM" id="SSF47323">
    <property type="entry name" value="Anticodon-binding domain of a subclass of class I aminoacyl-tRNA synthetases"/>
    <property type="match status" value="1"/>
</dbReference>
<dbReference type="SUPFAM" id="SSF52374">
    <property type="entry name" value="Nucleotidylyl transferase"/>
    <property type="match status" value="1"/>
</dbReference>
<dbReference type="SUPFAM" id="SSF50677">
    <property type="entry name" value="ValRS/IleRS/LeuRS editing domain"/>
    <property type="match status" value="1"/>
</dbReference>
<dbReference type="PROSITE" id="PS00178">
    <property type="entry name" value="AA_TRNA_LIGASE_I"/>
    <property type="match status" value="1"/>
</dbReference>
<gene>
    <name evidence="1" type="primary">leuS</name>
    <name type="ordered locus">ABO_1947</name>
</gene>
<evidence type="ECO:0000255" key="1">
    <source>
        <dbReference type="HAMAP-Rule" id="MF_00049"/>
    </source>
</evidence>
<evidence type="ECO:0000305" key="2"/>
<proteinExistence type="inferred from homology"/>
<sequence length="815" mass="91315">MDVQYRPDQIEAQAQQYWDDNQSFKVTEDASKEKFYCLSMFPYPSGRLHMGHVRNYSIGDVVSRYQRMLGKNVLQPMGWDAFGLPAENAAIKNKVAPAKWTFENIDYMRGQLQRLGFGYDWGRELATCTPEYYRWEQWFFTKLYEKGLVYRKMSTVNWDPVDQTVLANEQVIDGRGWRSGALVEQKEIPQWFIKITDYADELLNDLDQLDGWPEQVKTMQRNWIGRSEGVELDFPIEGEESLRVYTTRPDTLMGVSYVAVAAGHPLAQKAAAANHEVADFIKECQNTKTAEADMATMEKKGIYTGLTATHPISGEAVPVWIANFVLMGYGTGAVMAVPAHDQRDFEFAQKYGLPINQVIEPANGEPIDLALEAFTGKGTLIHSGEFDGLSSAEAFNAIANWLSERSLGEKKVNYRLRDWGVSRQRYWGTPIPMVETEDGTLHPTPEDQLPVALPTDVEMDGVTSPIKADPEWAKTTFNGQPALRETDTFDTFMESSWYYARYCSPQSDTAMLDPAATNYWLPVDQYIGGIEHAILHLLYSRFFHKLLRDTGLVNCDEPFKQLLCQGMVLKDGAKMSKSKGNTVDPQQMIEEYGADTVRLFMMFAAPPEQSLEWNDAGVEGAFRFIKRLWRLVAEHVEAGNTGTLDVNALDDAGKALRRKTHETIQKVSDDYGRRNTFNTAIAAVMELINEVSKFDAATDNALAVKQEALEAAVLLLAPIIPHAGHSLWQALGHDEAVIDASWPSVDESALVKDSIELVVQVNGKVRAKLNVPANADKASVESLAMDEPNVKKFTEGKTVRKVIVVPGKLVNIVAN</sequence>
<feature type="chain" id="PRO_0000334726" description="Leucine--tRNA ligase">
    <location>
        <begin position="1"/>
        <end position="815"/>
    </location>
</feature>
<feature type="short sequence motif" description="'HIGH' region">
    <location>
        <begin position="42"/>
        <end position="52"/>
    </location>
</feature>
<feature type="short sequence motif" description="'KMSKS' region">
    <location>
        <begin position="574"/>
        <end position="578"/>
    </location>
</feature>
<feature type="binding site" evidence="1">
    <location>
        <position position="577"/>
    </location>
    <ligand>
        <name>ATP</name>
        <dbReference type="ChEBI" id="CHEBI:30616"/>
    </ligand>
</feature>